<gene>
    <name evidence="1" type="primary">der</name>
    <name type="synonym">engA</name>
    <name type="ordered locus">Clim_0421</name>
</gene>
<dbReference type="EMBL" id="CP001097">
    <property type="protein sequence ID" value="ACD89514.1"/>
    <property type="molecule type" value="Genomic_DNA"/>
</dbReference>
<dbReference type="RefSeq" id="WP_012465395.1">
    <property type="nucleotide sequence ID" value="NC_010803.1"/>
</dbReference>
<dbReference type="SMR" id="B3EFY1"/>
<dbReference type="STRING" id="290315.Clim_0421"/>
<dbReference type="KEGG" id="cli:Clim_0421"/>
<dbReference type="eggNOG" id="COG1160">
    <property type="taxonomic scope" value="Bacteria"/>
</dbReference>
<dbReference type="HOGENOM" id="CLU_016077_6_2_10"/>
<dbReference type="OrthoDB" id="9805918at2"/>
<dbReference type="Proteomes" id="UP000008841">
    <property type="component" value="Chromosome"/>
</dbReference>
<dbReference type="GO" id="GO:0016887">
    <property type="term" value="F:ATP hydrolysis activity"/>
    <property type="evidence" value="ECO:0007669"/>
    <property type="project" value="InterPro"/>
</dbReference>
<dbReference type="GO" id="GO:0005525">
    <property type="term" value="F:GTP binding"/>
    <property type="evidence" value="ECO:0007669"/>
    <property type="project" value="UniProtKB-UniRule"/>
</dbReference>
<dbReference type="GO" id="GO:0043022">
    <property type="term" value="F:ribosome binding"/>
    <property type="evidence" value="ECO:0007669"/>
    <property type="project" value="TreeGrafter"/>
</dbReference>
<dbReference type="GO" id="GO:0042254">
    <property type="term" value="P:ribosome biogenesis"/>
    <property type="evidence" value="ECO:0007669"/>
    <property type="project" value="UniProtKB-KW"/>
</dbReference>
<dbReference type="CDD" id="cd01894">
    <property type="entry name" value="EngA1"/>
    <property type="match status" value="1"/>
</dbReference>
<dbReference type="CDD" id="cd01895">
    <property type="entry name" value="EngA2"/>
    <property type="match status" value="1"/>
</dbReference>
<dbReference type="FunFam" id="3.30.300.20:FF:000004">
    <property type="entry name" value="GTPase Der"/>
    <property type="match status" value="1"/>
</dbReference>
<dbReference type="FunFam" id="3.40.50.300:FF:000040">
    <property type="entry name" value="GTPase Der"/>
    <property type="match status" value="1"/>
</dbReference>
<dbReference type="Gene3D" id="3.30.300.20">
    <property type="match status" value="1"/>
</dbReference>
<dbReference type="Gene3D" id="3.40.50.300">
    <property type="entry name" value="P-loop containing nucleotide triphosphate hydrolases"/>
    <property type="match status" value="2"/>
</dbReference>
<dbReference type="HAMAP" id="MF_00195">
    <property type="entry name" value="GTPase_Der"/>
    <property type="match status" value="1"/>
</dbReference>
<dbReference type="InterPro" id="IPR003593">
    <property type="entry name" value="AAA+_ATPase"/>
</dbReference>
<dbReference type="InterPro" id="IPR031166">
    <property type="entry name" value="G_ENGA"/>
</dbReference>
<dbReference type="InterPro" id="IPR006073">
    <property type="entry name" value="GTP-bd"/>
</dbReference>
<dbReference type="InterPro" id="IPR016484">
    <property type="entry name" value="GTPase_Der"/>
</dbReference>
<dbReference type="InterPro" id="IPR032859">
    <property type="entry name" value="KH_dom-like"/>
</dbReference>
<dbReference type="InterPro" id="IPR015946">
    <property type="entry name" value="KH_dom-like_a/b"/>
</dbReference>
<dbReference type="InterPro" id="IPR027417">
    <property type="entry name" value="P-loop_NTPase"/>
</dbReference>
<dbReference type="InterPro" id="IPR005225">
    <property type="entry name" value="Small_GTP-bd"/>
</dbReference>
<dbReference type="NCBIfam" id="TIGR03594">
    <property type="entry name" value="GTPase_EngA"/>
    <property type="match status" value="1"/>
</dbReference>
<dbReference type="NCBIfam" id="TIGR00231">
    <property type="entry name" value="small_GTP"/>
    <property type="match status" value="2"/>
</dbReference>
<dbReference type="PANTHER" id="PTHR43834">
    <property type="entry name" value="GTPASE DER"/>
    <property type="match status" value="1"/>
</dbReference>
<dbReference type="PANTHER" id="PTHR43834:SF6">
    <property type="entry name" value="GTPASE DER"/>
    <property type="match status" value="1"/>
</dbReference>
<dbReference type="Pfam" id="PF14714">
    <property type="entry name" value="KH_dom-like"/>
    <property type="match status" value="1"/>
</dbReference>
<dbReference type="Pfam" id="PF01926">
    <property type="entry name" value="MMR_HSR1"/>
    <property type="match status" value="2"/>
</dbReference>
<dbReference type="PIRSF" id="PIRSF006485">
    <property type="entry name" value="GTP-binding_EngA"/>
    <property type="match status" value="1"/>
</dbReference>
<dbReference type="PRINTS" id="PR00326">
    <property type="entry name" value="GTP1OBG"/>
</dbReference>
<dbReference type="SMART" id="SM00382">
    <property type="entry name" value="AAA"/>
    <property type="match status" value="2"/>
</dbReference>
<dbReference type="SUPFAM" id="SSF52540">
    <property type="entry name" value="P-loop containing nucleoside triphosphate hydrolases"/>
    <property type="match status" value="2"/>
</dbReference>
<dbReference type="PROSITE" id="PS51712">
    <property type="entry name" value="G_ENGA"/>
    <property type="match status" value="2"/>
</dbReference>
<sequence length="437" mass="49369">MKPLIALVGRPNVGKSTLFNRILRQKSAIVDSTPGVTRDRHIMPGEWQGKQFLLMDTGGYCAANDVISSSMIEQTLTAIRDADCVIFLTDVRSGLTYDDLEISKLLQRTFQNKQIFFAVNKVESPQLTIDAESFVSTGFTRPYFLSAKDGSGVADMLDDILESLPESEHTDDDEDTSVKLAVVGRPNVGKSSFVNALLGTNRHIVSDIPGTTRDAIDSRFIRKQQEYVLIDTAGLRKRTKIDAGVEFYSSLRTEKAIERCQVAVVLLDARAGLEKQDLKIINMAEERKKGVLLLVNKWDLIEKDSKTSKIYEDDLRSHMGNLSWIPVLFISALTKKNLYRAIDTAEEISRNRSRKISTSSLNRFLEEALSAVHPSTKSGKELKIKYMTQIDSHWPVFAFFCNNPELVQSNFRKFLEKKLREQFQLDGVPISLRFMEK</sequence>
<comment type="function">
    <text evidence="1">GTPase that plays an essential role in the late steps of ribosome biogenesis.</text>
</comment>
<comment type="subunit">
    <text evidence="1">Associates with the 50S ribosomal subunit.</text>
</comment>
<comment type="similarity">
    <text evidence="1">Belongs to the TRAFAC class TrmE-Era-EngA-EngB-Septin-like GTPase superfamily. EngA (Der) GTPase family.</text>
</comment>
<protein>
    <recommendedName>
        <fullName evidence="1">GTPase Der</fullName>
    </recommendedName>
    <alternativeName>
        <fullName evidence="1">GTP-binding protein EngA</fullName>
    </alternativeName>
</protein>
<reference key="1">
    <citation type="submission" date="2008-05" db="EMBL/GenBank/DDBJ databases">
        <title>Complete sequence of Chlorobium limicola DSM 245.</title>
        <authorList>
            <consortium name="US DOE Joint Genome Institute"/>
            <person name="Lucas S."/>
            <person name="Copeland A."/>
            <person name="Lapidus A."/>
            <person name="Glavina del Rio T."/>
            <person name="Dalin E."/>
            <person name="Tice H."/>
            <person name="Bruce D."/>
            <person name="Goodwin L."/>
            <person name="Pitluck S."/>
            <person name="Schmutz J."/>
            <person name="Larimer F."/>
            <person name="Land M."/>
            <person name="Hauser L."/>
            <person name="Kyrpides N."/>
            <person name="Ovchinnikova G."/>
            <person name="Zhao F."/>
            <person name="Li T."/>
            <person name="Liu Z."/>
            <person name="Overmann J."/>
            <person name="Bryant D.A."/>
            <person name="Richardson P."/>
        </authorList>
    </citation>
    <scope>NUCLEOTIDE SEQUENCE [LARGE SCALE GENOMIC DNA]</scope>
    <source>
        <strain>DSM 245 / NBRC 103803 / 6330</strain>
    </source>
</reference>
<feature type="chain" id="PRO_1000099101" description="GTPase Der">
    <location>
        <begin position="1"/>
        <end position="437"/>
    </location>
</feature>
<feature type="domain" description="EngA-type G 1">
    <location>
        <begin position="3"/>
        <end position="168"/>
    </location>
</feature>
<feature type="domain" description="EngA-type G 2">
    <location>
        <begin position="178"/>
        <end position="353"/>
    </location>
</feature>
<feature type="domain" description="KH-like" evidence="1">
    <location>
        <begin position="354"/>
        <end position="437"/>
    </location>
</feature>
<feature type="binding site" evidence="1">
    <location>
        <begin position="9"/>
        <end position="16"/>
    </location>
    <ligand>
        <name>GTP</name>
        <dbReference type="ChEBI" id="CHEBI:37565"/>
        <label>1</label>
    </ligand>
</feature>
<feature type="binding site" evidence="1">
    <location>
        <begin position="56"/>
        <end position="60"/>
    </location>
    <ligand>
        <name>GTP</name>
        <dbReference type="ChEBI" id="CHEBI:37565"/>
        <label>1</label>
    </ligand>
</feature>
<feature type="binding site" evidence="1">
    <location>
        <begin position="120"/>
        <end position="123"/>
    </location>
    <ligand>
        <name>GTP</name>
        <dbReference type="ChEBI" id="CHEBI:37565"/>
        <label>1</label>
    </ligand>
</feature>
<feature type="binding site" evidence="1">
    <location>
        <begin position="184"/>
        <end position="191"/>
    </location>
    <ligand>
        <name>GTP</name>
        <dbReference type="ChEBI" id="CHEBI:37565"/>
        <label>2</label>
    </ligand>
</feature>
<feature type="binding site" evidence="1">
    <location>
        <begin position="231"/>
        <end position="235"/>
    </location>
    <ligand>
        <name>GTP</name>
        <dbReference type="ChEBI" id="CHEBI:37565"/>
        <label>2</label>
    </ligand>
</feature>
<feature type="binding site" evidence="1">
    <location>
        <begin position="296"/>
        <end position="299"/>
    </location>
    <ligand>
        <name>GTP</name>
        <dbReference type="ChEBI" id="CHEBI:37565"/>
        <label>2</label>
    </ligand>
</feature>
<keyword id="KW-0342">GTP-binding</keyword>
<keyword id="KW-0547">Nucleotide-binding</keyword>
<keyword id="KW-0677">Repeat</keyword>
<keyword id="KW-0690">Ribosome biogenesis</keyword>
<accession>B3EFY1</accession>
<organism>
    <name type="scientific">Chlorobium limicola (strain DSM 245 / NBRC 103803 / 6330)</name>
    <dbReference type="NCBI Taxonomy" id="290315"/>
    <lineage>
        <taxon>Bacteria</taxon>
        <taxon>Pseudomonadati</taxon>
        <taxon>Chlorobiota</taxon>
        <taxon>Chlorobiia</taxon>
        <taxon>Chlorobiales</taxon>
        <taxon>Chlorobiaceae</taxon>
        <taxon>Chlorobium/Pelodictyon group</taxon>
        <taxon>Chlorobium</taxon>
    </lineage>
</organism>
<evidence type="ECO:0000255" key="1">
    <source>
        <dbReference type="HAMAP-Rule" id="MF_00195"/>
    </source>
</evidence>
<proteinExistence type="inferred from homology"/>
<name>DER_CHLL2</name>